<name>RL16_STRT2</name>
<comment type="function">
    <text evidence="1">Binds 23S rRNA and is also seen to make contacts with the A and possibly P site tRNAs.</text>
</comment>
<comment type="subunit">
    <text evidence="1">Part of the 50S ribosomal subunit.</text>
</comment>
<comment type="similarity">
    <text evidence="1">Belongs to the universal ribosomal protein uL16 family.</text>
</comment>
<reference key="1">
    <citation type="journal article" date="2004" name="Nat. Biotechnol.">
        <title>Complete sequence and comparative genome analysis of the dairy bacterium Streptococcus thermophilus.</title>
        <authorList>
            <person name="Bolotin A."/>
            <person name="Quinquis B."/>
            <person name="Renault P."/>
            <person name="Sorokin A."/>
            <person name="Ehrlich S.D."/>
            <person name="Kulakauskas S."/>
            <person name="Lapidus A."/>
            <person name="Goltsman E."/>
            <person name="Mazur M."/>
            <person name="Pusch G.D."/>
            <person name="Fonstein M."/>
            <person name="Overbeek R."/>
            <person name="Kyprides N."/>
            <person name="Purnelle B."/>
            <person name="Prozzi D."/>
            <person name="Ngui K."/>
            <person name="Masuy D."/>
            <person name="Hancy F."/>
            <person name="Burteau S."/>
            <person name="Boutry M."/>
            <person name="Delcour J."/>
            <person name="Goffeau A."/>
            <person name="Hols P."/>
        </authorList>
    </citation>
    <scope>NUCLEOTIDE SEQUENCE [LARGE SCALE GENOMIC DNA]</scope>
    <source>
        <strain>ATCC BAA-250 / LMG 18311</strain>
    </source>
</reference>
<sequence length="137" mass="15456">MLVPKRVKHRREFRGKMRGEAKGGKEVSFGEYGLQATTSHWITNRQIEAARIAMTRYMKRGGKVWIKIFPHKSYTAKAIGVRMGSGKGAPEGWVAPVKRGKVMFEIAGVSEEVAREAFRLASHKLPVKSKFVKREAE</sequence>
<organism>
    <name type="scientific">Streptococcus thermophilus (strain ATCC BAA-250 / LMG 18311)</name>
    <dbReference type="NCBI Taxonomy" id="264199"/>
    <lineage>
        <taxon>Bacteria</taxon>
        <taxon>Bacillati</taxon>
        <taxon>Bacillota</taxon>
        <taxon>Bacilli</taxon>
        <taxon>Lactobacillales</taxon>
        <taxon>Streptococcaceae</taxon>
        <taxon>Streptococcus</taxon>
    </lineage>
</organism>
<evidence type="ECO:0000255" key="1">
    <source>
        <dbReference type="HAMAP-Rule" id="MF_01342"/>
    </source>
</evidence>
<evidence type="ECO:0000305" key="2"/>
<protein>
    <recommendedName>
        <fullName evidence="1">Large ribosomal subunit protein uL16</fullName>
    </recommendedName>
    <alternativeName>
        <fullName evidence="2">50S ribosomal protein L16</fullName>
    </alternativeName>
</protein>
<proteinExistence type="inferred from homology"/>
<dbReference type="EMBL" id="CP000023">
    <property type="protein sequence ID" value="AAV61525.1"/>
    <property type="molecule type" value="Genomic_DNA"/>
</dbReference>
<dbReference type="RefSeq" id="WP_011226664.1">
    <property type="nucleotide sequence ID" value="NC_006448.1"/>
</dbReference>
<dbReference type="SMR" id="Q5M2C0"/>
<dbReference type="STRING" id="264199.stu1927"/>
<dbReference type="GeneID" id="66899655"/>
<dbReference type="KEGG" id="stl:stu1927"/>
<dbReference type="PATRIC" id="fig|264199.4.peg.1912"/>
<dbReference type="eggNOG" id="COG0197">
    <property type="taxonomic scope" value="Bacteria"/>
</dbReference>
<dbReference type="HOGENOM" id="CLU_078858_2_1_9"/>
<dbReference type="Proteomes" id="UP000001170">
    <property type="component" value="Chromosome"/>
</dbReference>
<dbReference type="GO" id="GO:0022625">
    <property type="term" value="C:cytosolic large ribosomal subunit"/>
    <property type="evidence" value="ECO:0007669"/>
    <property type="project" value="TreeGrafter"/>
</dbReference>
<dbReference type="GO" id="GO:0019843">
    <property type="term" value="F:rRNA binding"/>
    <property type="evidence" value="ECO:0007669"/>
    <property type="project" value="UniProtKB-UniRule"/>
</dbReference>
<dbReference type="GO" id="GO:0003735">
    <property type="term" value="F:structural constituent of ribosome"/>
    <property type="evidence" value="ECO:0007669"/>
    <property type="project" value="InterPro"/>
</dbReference>
<dbReference type="GO" id="GO:0000049">
    <property type="term" value="F:tRNA binding"/>
    <property type="evidence" value="ECO:0007669"/>
    <property type="project" value="UniProtKB-KW"/>
</dbReference>
<dbReference type="GO" id="GO:0006412">
    <property type="term" value="P:translation"/>
    <property type="evidence" value="ECO:0007669"/>
    <property type="project" value="UniProtKB-UniRule"/>
</dbReference>
<dbReference type="CDD" id="cd01433">
    <property type="entry name" value="Ribosomal_L16_L10e"/>
    <property type="match status" value="1"/>
</dbReference>
<dbReference type="FunFam" id="3.90.1170.10:FF:000001">
    <property type="entry name" value="50S ribosomal protein L16"/>
    <property type="match status" value="1"/>
</dbReference>
<dbReference type="Gene3D" id="3.90.1170.10">
    <property type="entry name" value="Ribosomal protein L10e/L16"/>
    <property type="match status" value="1"/>
</dbReference>
<dbReference type="HAMAP" id="MF_01342">
    <property type="entry name" value="Ribosomal_uL16"/>
    <property type="match status" value="1"/>
</dbReference>
<dbReference type="InterPro" id="IPR047873">
    <property type="entry name" value="Ribosomal_uL16"/>
</dbReference>
<dbReference type="InterPro" id="IPR000114">
    <property type="entry name" value="Ribosomal_uL16_bact-type"/>
</dbReference>
<dbReference type="InterPro" id="IPR020798">
    <property type="entry name" value="Ribosomal_uL16_CS"/>
</dbReference>
<dbReference type="InterPro" id="IPR016180">
    <property type="entry name" value="Ribosomal_uL16_dom"/>
</dbReference>
<dbReference type="InterPro" id="IPR036920">
    <property type="entry name" value="Ribosomal_uL16_sf"/>
</dbReference>
<dbReference type="NCBIfam" id="TIGR01164">
    <property type="entry name" value="rplP_bact"/>
    <property type="match status" value="1"/>
</dbReference>
<dbReference type="PANTHER" id="PTHR12220">
    <property type="entry name" value="50S/60S RIBOSOMAL PROTEIN L16"/>
    <property type="match status" value="1"/>
</dbReference>
<dbReference type="PANTHER" id="PTHR12220:SF13">
    <property type="entry name" value="LARGE RIBOSOMAL SUBUNIT PROTEIN UL16M"/>
    <property type="match status" value="1"/>
</dbReference>
<dbReference type="Pfam" id="PF00252">
    <property type="entry name" value="Ribosomal_L16"/>
    <property type="match status" value="1"/>
</dbReference>
<dbReference type="PRINTS" id="PR00060">
    <property type="entry name" value="RIBOSOMALL16"/>
</dbReference>
<dbReference type="SUPFAM" id="SSF54686">
    <property type="entry name" value="Ribosomal protein L16p/L10e"/>
    <property type="match status" value="1"/>
</dbReference>
<dbReference type="PROSITE" id="PS00586">
    <property type="entry name" value="RIBOSOMAL_L16_1"/>
    <property type="match status" value="1"/>
</dbReference>
<dbReference type="PROSITE" id="PS00701">
    <property type="entry name" value="RIBOSOMAL_L16_2"/>
    <property type="match status" value="1"/>
</dbReference>
<feature type="chain" id="PRO_0000062224" description="Large ribosomal subunit protein uL16">
    <location>
        <begin position="1"/>
        <end position="137"/>
    </location>
</feature>
<keyword id="KW-1185">Reference proteome</keyword>
<keyword id="KW-0687">Ribonucleoprotein</keyword>
<keyword id="KW-0689">Ribosomal protein</keyword>
<keyword id="KW-0694">RNA-binding</keyword>
<keyword id="KW-0699">rRNA-binding</keyword>
<keyword id="KW-0820">tRNA-binding</keyword>
<accession>Q5M2C0</accession>
<gene>
    <name evidence="1" type="primary">rplP</name>
    <name type="ordered locus">stu1927</name>
</gene>